<keyword id="KW-0285">Flavoprotein</keyword>
<keyword id="KW-0288">FMN</keyword>
<keyword id="KW-0560">Oxidoreductase</keyword>
<keyword id="KW-0664">Pyridoxine biosynthesis</keyword>
<keyword id="KW-1185">Reference proteome</keyword>
<reference key="1">
    <citation type="journal article" date="2001" name="Science">
        <title>The genome of the natural genetic engineer Agrobacterium tumefaciens C58.</title>
        <authorList>
            <person name="Wood D.W."/>
            <person name="Setubal J.C."/>
            <person name="Kaul R."/>
            <person name="Monks D.E."/>
            <person name="Kitajima J.P."/>
            <person name="Okura V.K."/>
            <person name="Zhou Y."/>
            <person name="Chen L."/>
            <person name="Wood G.E."/>
            <person name="Almeida N.F. Jr."/>
            <person name="Woo L."/>
            <person name="Chen Y."/>
            <person name="Paulsen I.T."/>
            <person name="Eisen J.A."/>
            <person name="Karp P.D."/>
            <person name="Bovee D. Sr."/>
            <person name="Chapman P."/>
            <person name="Clendenning J."/>
            <person name="Deatherage G."/>
            <person name="Gillet W."/>
            <person name="Grant C."/>
            <person name="Kutyavin T."/>
            <person name="Levy R."/>
            <person name="Li M.-J."/>
            <person name="McClelland E."/>
            <person name="Palmieri A."/>
            <person name="Raymond C."/>
            <person name="Rouse G."/>
            <person name="Saenphimmachak C."/>
            <person name="Wu Z."/>
            <person name="Romero P."/>
            <person name="Gordon D."/>
            <person name="Zhang S."/>
            <person name="Yoo H."/>
            <person name="Tao Y."/>
            <person name="Biddle P."/>
            <person name="Jung M."/>
            <person name="Krespan W."/>
            <person name="Perry M."/>
            <person name="Gordon-Kamm B."/>
            <person name="Liao L."/>
            <person name="Kim S."/>
            <person name="Hendrick C."/>
            <person name="Zhao Z.-Y."/>
            <person name="Dolan M."/>
            <person name="Chumley F."/>
            <person name="Tingey S.V."/>
            <person name="Tomb J.-F."/>
            <person name="Gordon M.P."/>
            <person name="Olson M.V."/>
            <person name="Nester E.W."/>
        </authorList>
    </citation>
    <scope>NUCLEOTIDE SEQUENCE [LARGE SCALE GENOMIC DNA]</scope>
    <source>
        <strain>C58 / ATCC 33970</strain>
    </source>
</reference>
<reference key="2">
    <citation type="journal article" date="2001" name="Science">
        <title>Genome sequence of the plant pathogen and biotechnology agent Agrobacterium tumefaciens C58.</title>
        <authorList>
            <person name="Goodner B."/>
            <person name="Hinkle G."/>
            <person name="Gattung S."/>
            <person name="Miller N."/>
            <person name="Blanchard M."/>
            <person name="Qurollo B."/>
            <person name="Goldman B.S."/>
            <person name="Cao Y."/>
            <person name="Askenazi M."/>
            <person name="Halling C."/>
            <person name="Mullin L."/>
            <person name="Houmiel K."/>
            <person name="Gordon J."/>
            <person name="Vaudin M."/>
            <person name="Iartchouk O."/>
            <person name="Epp A."/>
            <person name="Liu F."/>
            <person name="Wollam C."/>
            <person name="Allinger M."/>
            <person name="Doughty D."/>
            <person name="Scott C."/>
            <person name="Lappas C."/>
            <person name="Markelz B."/>
            <person name="Flanagan C."/>
            <person name="Crowell C."/>
            <person name="Gurson J."/>
            <person name="Lomo C."/>
            <person name="Sear C."/>
            <person name="Strub G."/>
            <person name="Cielo C."/>
            <person name="Slater S."/>
        </authorList>
    </citation>
    <scope>NUCLEOTIDE SEQUENCE [LARGE SCALE GENOMIC DNA]</scope>
    <source>
        <strain>C58 / ATCC 33970</strain>
    </source>
</reference>
<protein>
    <recommendedName>
        <fullName evidence="1">Pyridoxine/pyridoxamine 5'-phosphate oxidase</fullName>
        <ecNumber evidence="1">1.4.3.5</ecNumber>
    </recommendedName>
    <alternativeName>
        <fullName evidence="1">PNP/PMP oxidase</fullName>
        <shortName evidence="1">PNPOx</shortName>
    </alternativeName>
    <alternativeName>
        <fullName evidence="1">Pyridoxal 5'-phosphate synthase</fullName>
    </alternativeName>
</protein>
<sequence length="206" mass="23721">MSETGLTSSDFTEENEPFALFAEWLKDATASEINDPNAVALATVDENGLPNVRMVLLKGVDDRGFVFYTNFESQKGQEILGQKKAAMCFHWKSLRRQVRLRGEVEIVSDEEADAYYASRPRGSRIGAWASKQSRPLEGRFALEKAVAEYTARYAIGEIPRPSHWSGFRIRPVSIEFWHDRKFRLHDRIEFRRETPDGAWSKVRMYP</sequence>
<accession>Q8UHC2</accession>
<accession>Q7D0R1</accession>
<name>PDXH_AGRFC</name>
<organism>
    <name type="scientific">Agrobacterium fabrum (strain C58 / ATCC 33970)</name>
    <name type="common">Agrobacterium tumefaciens (strain C58)</name>
    <dbReference type="NCBI Taxonomy" id="176299"/>
    <lineage>
        <taxon>Bacteria</taxon>
        <taxon>Pseudomonadati</taxon>
        <taxon>Pseudomonadota</taxon>
        <taxon>Alphaproteobacteria</taxon>
        <taxon>Hyphomicrobiales</taxon>
        <taxon>Rhizobiaceae</taxon>
        <taxon>Rhizobium/Agrobacterium group</taxon>
        <taxon>Agrobacterium</taxon>
        <taxon>Agrobacterium tumefaciens complex</taxon>
    </lineage>
</organism>
<feature type="chain" id="PRO_0000167678" description="Pyridoxine/pyridoxamine 5'-phosphate oxidase">
    <location>
        <begin position="1"/>
        <end position="206"/>
    </location>
</feature>
<feature type="binding site" evidence="1">
    <location>
        <begin position="53"/>
        <end position="58"/>
    </location>
    <ligand>
        <name>FMN</name>
        <dbReference type="ChEBI" id="CHEBI:58210"/>
    </ligand>
</feature>
<feature type="binding site" evidence="1">
    <location>
        <position position="58"/>
    </location>
    <ligand>
        <name>substrate</name>
    </ligand>
</feature>
<feature type="binding site" evidence="1">
    <location>
        <begin position="68"/>
        <end position="69"/>
    </location>
    <ligand>
        <name>FMN</name>
        <dbReference type="ChEBI" id="CHEBI:58210"/>
    </ligand>
</feature>
<feature type="binding site" evidence="1">
    <location>
        <position position="75"/>
    </location>
    <ligand>
        <name>FMN</name>
        <dbReference type="ChEBI" id="CHEBI:58210"/>
    </ligand>
</feature>
<feature type="binding site" evidence="1">
    <location>
        <position position="97"/>
    </location>
    <ligand>
        <name>FMN</name>
        <dbReference type="ChEBI" id="CHEBI:58210"/>
    </ligand>
</feature>
<feature type="binding site" evidence="1">
    <location>
        <position position="115"/>
    </location>
    <ligand>
        <name>substrate</name>
    </ligand>
</feature>
<feature type="binding site" evidence="1">
    <location>
        <position position="119"/>
    </location>
    <ligand>
        <name>substrate</name>
    </ligand>
</feature>
<feature type="binding site" evidence="1">
    <location>
        <position position="123"/>
    </location>
    <ligand>
        <name>substrate</name>
    </ligand>
</feature>
<feature type="binding site" evidence="1">
    <location>
        <begin position="132"/>
        <end position="133"/>
    </location>
    <ligand>
        <name>FMN</name>
        <dbReference type="ChEBI" id="CHEBI:58210"/>
    </ligand>
</feature>
<feature type="binding site" evidence="1">
    <location>
        <position position="177"/>
    </location>
    <ligand>
        <name>FMN</name>
        <dbReference type="ChEBI" id="CHEBI:58210"/>
    </ligand>
</feature>
<feature type="binding site" evidence="1">
    <location>
        <begin position="183"/>
        <end position="185"/>
    </location>
    <ligand>
        <name>substrate</name>
    </ligand>
</feature>
<feature type="binding site" evidence="1">
    <location>
        <position position="187"/>
    </location>
    <ligand>
        <name>FMN</name>
        <dbReference type="ChEBI" id="CHEBI:58210"/>
    </ligand>
</feature>
<dbReference type="EC" id="1.4.3.5" evidence="1"/>
<dbReference type="EMBL" id="AE007869">
    <property type="protein sequence ID" value="AAK86569.1"/>
    <property type="molecule type" value="Genomic_DNA"/>
</dbReference>
<dbReference type="PIR" id="AB2670">
    <property type="entry name" value="AB2670"/>
</dbReference>
<dbReference type="PIR" id="H97451">
    <property type="entry name" value="H97451"/>
</dbReference>
<dbReference type="RefSeq" id="NP_353784.1">
    <property type="nucleotide sequence ID" value="NC_003062.2"/>
</dbReference>
<dbReference type="RefSeq" id="WP_006309812.1">
    <property type="nucleotide sequence ID" value="NC_003062.2"/>
</dbReference>
<dbReference type="SMR" id="Q8UHC2"/>
<dbReference type="STRING" id="176299.Atu0760"/>
<dbReference type="EnsemblBacteria" id="AAK86569">
    <property type="protein sequence ID" value="AAK86569"/>
    <property type="gene ID" value="Atu0760"/>
</dbReference>
<dbReference type="GeneID" id="1132798"/>
<dbReference type="KEGG" id="atu:Atu0760"/>
<dbReference type="PATRIC" id="fig|176299.10.peg.758"/>
<dbReference type="eggNOG" id="COG0259">
    <property type="taxonomic scope" value="Bacteria"/>
</dbReference>
<dbReference type="HOGENOM" id="CLU_032263_2_2_5"/>
<dbReference type="OrthoDB" id="9780392at2"/>
<dbReference type="PhylomeDB" id="Q8UHC2"/>
<dbReference type="BioCyc" id="AGRO:ATU0760-MONOMER"/>
<dbReference type="UniPathway" id="UPA01068">
    <property type="reaction ID" value="UER00304"/>
</dbReference>
<dbReference type="UniPathway" id="UPA01068">
    <property type="reaction ID" value="UER00305"/>
</dbReference>
<dbReference type="Proteomes" id="UP000000813">
    <property type="component" value="Chromosome circular"/>
</dbReference>
<dbReference type="GO" id="GO:0010181">
    <property type="term" value="F:FMN binding"/>
    <property type="evidence" value="ECO:0007669"/>
    <property type="project" value="UniProtKB-UniRule"/>
</dbReference>
<dbReference type="GO" id="GO:0004733">
    <property type="term" value="F:pyridoxamine phosphate oxidase activity"/>
    <property type="evidence" value="ECO:0007669"/>
    <property type="project" value="UniProtKB-UniRule"/>
</dbReference>
<dbReference type="GO" id="GO:0008615">
    <property type="term" value="P:pyridoxine biosynthetic process"/>
    <property type="evidence" value="ECO:0007669"/>
    <property type="project" value="UniProtKB-KW"/>
</dbReference>
<dbReference type="Gene3D" id="2.30.110.10">
    <property type="entry name" value="Electron Transport, Fmn-binding Protein, Chain A"/>
    <property type="match status" value="1"/>
</dbReference>
<dbReference type="HAMAP" id="MF_01629">
    <property type="entry name" value="PdxH"/>
    <property type="match status" value="1"/>
</dbReference>
<dbReference type="InterPro" id="IPR000659">
    <property type="entry name" value="Pyridox_Oxase"/>
</dbReference>
<dbReference type="InterPro" id="IPR019740">
    <property type="entry name" value="Pyridox_Oxase_CS"/>
</dbReference>
<dbReference type="InterPro" id="IPR011576">
    <property type="entry name" value="Pyridox_Oxase_N"/>
</dbReference>
<dbReference type="InterPro" id="IPR019576">
    <property type="entry name" value="Pyridoxamine_oxidase_dimer_C"/>
</dbReference>
<dbReference type="InterPro" id="IPR012349">
    <property type="entry name" value="Split_barrel_FMN-bd"/>
</dbReference>
<dbReference type="NCBIfam" id="TIGR00558">
    <property type="entry name" value="pdxH"/>
    <property type="match status" value="1"/>
</dbReference>
<dbReference type="NCBIfam" id="NF004231">
    <property type="entry name" value="PRK05679.1"/>
    <property type="match status" value="1"/>
</dbReference>
<dbReference type="PANTHER" id="PTHR10851:SF0">
    <property type="entry name" value="PYRIDOXINE-5'-PHOSPHATE OXIDASE"/>
    <property type="match status" value="1"/>
</dbReference>
<dbReference type="PANTHER" id="PTHR10851">
    <property type="entry name" value="PYRIDOXINE-5-PHOSPHATE OXIDASE"/>
    <property type="match status" value="1"/>
</dbReference>
<dbReference type="Pfam" id="PF10590">
    <property type="entry name" value="PNP_phzG_C"/>
    <property type="match status" value="1"/>
</dbReference>
<dbReference type="Pfam" id="PF01243">
    <property type="entry name" value="PNPOx_N"/>
    <property type="match status" value="1"/>
</dbReference>
<dbReference type="PIRSF" id="PIRSF000190">
    <property type="entry name" value="Pyd_amn-ph_oxd"/>
    <property type="match status" value="1"/>
</dbReference>
<dbReference type="SUPFAM" id="SSF50475">
    <property type="entry name" value="FMN-binding split barrel"/>
    <property type="match status" value="1"/>
</dbReference>
<dbReference type="PROSITE" id="PS01064">
    <property type="entry name" value="PYRIDOX_OXIDASE"/>
    <property type="match status" value="1"/>
</dbReference>
<comment type="function">
    <text evidence="1">Catalyzes the oxidation of either pyridoxine 5'-phosphate (PNP) or pyridoxamine 5'-phosphate (PMP) into pyridoxal 5'-phosphate (PLP).</text>
</comment>
<comment type="catalytic activity">
    <reaction evidence="1">
        <text>pyridoxamine 5'-phosphate + O2 + H2O = pyridoxal 5'-phosphate + H2O2 + NH4(+)</text>
        <dbReference type="Rhea" id="RHEA:15817"/>
        <dbReference type="ChEBI" id="CHEBI:15377"/>
        <dbReference type="ChEBI" id="CHEBI:15379"/>
        <dbReference type="ChEBI" id="CHEBI:16240"/>
        <dbReference type="ChEBI" id="CHEBI:28938"/>
        <dbReference type="ChEBI" id="CHEBI:58451"/>
        <dbReference type="ChEBI" id="CHEBI:597326"/>
        <dbReference type="EC" id="1.4.3.5"/>
    </reaction>
</comment>
<comment type="catalytic activity">
    <reaction evidence="1">
        <text>pyridoxine 5'-phosphate + O2 = pyridoxal 5'-phosphate + H2O2</text>
        <dbReference type="Rhea" id="RHEA:15149"/>
        <dbReference type="ChEBI" id="CHEBI:15379"/>
        <dbReference type="ChEBI" id="CHEBI:16240"/>
        <dbReference type="ChEBI" id="CHEBI:58589"/>
        <dbReference type="ChEBI" id="CHEBI:597326"/>
        <dbReference type="EC" id="1.4.3.5"/>
    </reaction>
</comment>
<comment type="cofactor">
    <cofactor evidence="1">
        <name>FMN</name>
        <dbReference type="ChEBI" id="CHEBI:58210"/>
    </cofactor>
    <text evidence="1">Binds 1 FMN per subunit.</text>
</comment>
<comment type="pathway">
    <text evidence="1">Cofactor metabolism; pyridoxal 5'-phosphate salvage; pyridoxal 5'-phosphate from pyridoxamine 5'-phosphate: step 1/1.</text>
</comment>
<comment type="pathway">
    <text evidence="1">Cofactor metabolism; pyridoxal 5'-phosphate salvage; pyridoxal 5'-phosphate from pyridoxine 5'-phosphate: step 1/1.</text>
</comment>
<comment type="subunit">
    <text evidence="1">Homodimer.</text>
</comment>
<comment type="similarity">
    <text evidence="1">Belongs to the pyridoxamine 5'-phosphate oxidase family.</text>
</comment>
<gene>
    <name evidence="1" type="primary">pdxH</name>
    <name type="ordered locus">Atu0760</name>
    <name type="ORF">AGR_C_1381</name>
</gene>
<evidence type="ECO:0000255" key="1">
    <source>
        <dbReference type="HAMAP-Rule" id="MF_01629"/>
    </source>
</evidence>
<proteinExistence type="inferred from homology"/>